<evidence type="ECO:0000255" key="1">
    <source>
        <dbReference type="HAMAP-Rule" id="MF_01147"/>
    </source>
</evidence>
<organism>
    <name type="scientific">Burkholderia cenocepacia (strain HI2424)</name>
    <dbReference type="NCBI Taxonomy" id="331272"/>
    <lineage>
        <taxon>Bacteria</taxon>
        <taxon>Pseudomonadati</taxon>
        <taxon>Pseudomonadota</taxon>
        <taxon>Betaproteobacteria</taxon>
        <taxon>Burkholderiales</taxon>
        <taxon>Burkholderiaceae</taxon>
        <taxon>Burkholderia</taxon>
        <taxon>Burkholderia cepacia complex</taxon>
    </lineage>
</organism>
<reference key="1">
    <citation type="submission" date="2006-08" db="EMBL/GenBank/DDBJ databases">
        <title>Complete sequence of chromosome 1 of Burkholderia cenocepacia HI2424.</title>
        <authorList>
            <person name="Copeland A."/>
            <person name="Lucas S."/>
            <person name="Lapidus A."/>
            <person name="Barry K."/>
            <person name="Detter J.C."/>
            <person name="Glavina del Rio T."/>
            <person name="Hammon N."/>
            <person name="Israni S."/>
            <person name="Pitluck S."/>
            <person name="Chain P."/>
            <person name="Malfatti S."/>
            <person name="Shin M."/>
            <person name="Vergez L."/>
            <person name="Schmutz J."/>
            <person name="Larimer F."/>
            <person name="Land M."/>
            <person name="Hauser L."/>
            <person name="Kyrpides N."/>
            <person name="Kim E."/>
            <person name="LiPuma J.J."/>
            <person name="Gonzalez C.F."/>
            <person name="Konstantinidis K."/>
            <person name="Tiedje J.M."/>
            <person name="Richardson P."/>
        </authorList>
    </citation>
    <scope>NUCLEOTIDE SEQUENCE [LARGE SCALE GENOMIC DNA]</scope>
    <source>
        <strain>HI2424</strain>
    </source>
</reference>
<dbReference type="EC" id="2.5.1.145" evidence="1"/>
<dbReference type="EMBL" id="CP000458">
    <property type="protein sequence ID" value="ABK09210.1"/>
    <property type="molecule type" value="Genomic_DNA"/>
</dbReference>
<dbReference type="RefSeq" id="WP_011545976.1">
    <property type="nucleotide sequence ID" value="NC_008542.1"/>
</dbReference>
<dbReference type="SMR" id="A0K9N3"/>
<dbReference type="KEGG" id="bch:Bcen2424_2460"/>
<dbReference type="HOGENOM" id="CLU_013386_1_0_4"/>
<dbReference type="UniPathway" id="UPA00664"/>
<dbReference type="GO" id="GO:0005886">
    <property type="term" value="C:plasma membrane"/>
    <property type="evidence" value="ECO:0007669"/>
    <property type="project" value="UniProtKB-SubCell"/>
</dbReference>
<dbReference type="GO" id="GO:0008961">
    <property type="term" value="F:phosphatidylglycerol-prolipoprotein diacylglyceryl transferase activity"/>
    <property type="evidence" value="ECO:0007669"/>
    <property type="project" value="UniProtKB-UniRule"/>
</dbReference>
<dbReference type="GO" id="GO:0042158">
    <property type="term" value="P:lipoprotein biosynthetic process"/>
    <property type="evidence" value="ECO:0007669"/>
    <property type="project" value="UniProtKB-UniRule"/>
</dbReference>
<dbReference type="HAMAP" id="MF_01147">
    <property type="entry name" value="Lgt"/>
    <property type="match status" value="1"/>
</dbReference>
<dbReference type="InterPro" id="IPR001640">
    <property type="entry name" value="Lgt"/>
</dbReference>
<dbReference type="NCBIfam" id="TIGR00544">
    <property type="entry name" value="lgt"/>
    <property type="match status" value="1"/>
</dbReference>
<dbReference type="PANTHER" id="PTHR30589:SF0">
    <property type="entry name" value="PHOSPHATIDYLGLYCEROL--PROLIPOPROTEIN DIACYLGLYCERYL TRANSFERASE"/>
    <property type="match status" value="1"/>
</dbReference>
<dbReference type="PANTHER" id="PTHR30589">
    <property type="entry name" value="PROLIPOPROTEIN DIACYLGLYCERYL TRANSFERASE"/>
    <property type="match status" value="1"/>
</dbReference>
<dbReference type="Pfam" id="PF01790">
    <property type="entry name" value="LGT"/>
    <property type="match status" value="1"/>
</dbReference>
<dbReference type="PROSITE" id="PS01311">
    <property type="entry name" value="LGT"/>
    <property type="match status" value="1"/>
</dbReference>
<protein>
    <recommendedName>
        <fullName evidence="1">Phosphatidylglycerol--prolipoprotein diacylglyceryl transferase</fullName>
        <ecNumber evidence="1">2.5.1.145</ecNumber>
    </recommendedName>
</protein>
<keyword id="KW-0997">Cell inner membrane</keyword>
<keyword id="KW-1003">Cell membrane</keyword>
<keyword id="KW-0472">Membrane</keyword>
<keyword id="KW-0808">Transferase</keyword>
<keyword id="KW-0812">Transmembrane</keyword>
<keyword id="KW-1133">Transmembrane helix</keyword>
<sequence length="296" mass="33303">MIIHPNFDPVAIHLGPLAVRWYGLMYLVGFIAAIVVGRIRLKLPYVAAQGWTAKDIDDMMFYGVLGTVLGGRLGYVLFYKADFYFSHPLDVFKVWEGGMSFHGGFLGVTLAMMLFAWQRKRHWLQVTDFVAPMVPLGLAAGRLGNFINGELWGRVTDPTAPWAMLFPGAMRDDAAWLPKHPELVEKWHLADVFMQYQMLPRHPSQLYEIALEGIALFFVLFLFARKPRPMGAISALFLIGYGLARFTVEFAREPDDFLGLLALGLSMGQWLSLPMILAGIAMMVWAYRRRAANAAA</sequence>
<feature type="chain" id="PRO_1000053397" description="Phosphatidylglycerol--prolipoprotein diacylglyceryl transferase">
    <location>
        <begin position="1"/>
        <end position="296"/>
    </location>
</feature>
<feature type="transmembrane region" description="Helical" evidence="1">
    <location>
        <begin position="17"/>
        <end position="37"/>
    </location>
</feature>
<feature type="transmembrane region" description="Helical" evidence="1">
    <location>
        <begin position="59"/>
        <end position="79"/>
    </location>
</feature>
<feature type="transmembrane region" description="Helical" evidence="1">
    <location>
        <begin position="97"/>
        <end position="117"/>
    </location>
</feature>
<feature type="transmembrane region" description="Helical" evidence="1">
    <location>
        <begin position="129"/>
        <end position="149"/>
    </location>
</feature>
<feature type="transmembrane region" description="Helical" evidence="1">
    <location>
        <begin position="204"/>
        <end position="224"/>
    </location>
</feature>
<feature type="transmembrane region" description="Helical" evidence="1">
    <location>
        <begin position="230"/>
        <end position="250"/>
    </location>
</feature>
<feature type="transmembrane region" description="Helical" evidence="1">
    <location>
        <begin position="257"/>
        <end position="277"/>
    </location>
</feature>
<feature type="binding site" evidence="1">
    <location>
        <position position="142"/>
    </location>
    <ligand>
        <name>a 1,2-diacyl-sn-glycero-3-phospho-(1'-sn-glycerol)</name>
        <dbReference type="ChEBI" id="CHEBI:64716"/>
    </ligand>
</feature>
<comment type="function">
    <text evidence="1">Catalyzes the transfer of the diacylglyceryl group from phosphatidylglycerol to the sulfhydryl group of the N-terminal cysteine of a prolipoprotein, the first step in the formation of mature lipoproteins.</text>
</comment>
<comment type="catalytic activity">
    <reaction evidence="1">
        <text>L-cysteinyl-[prolipoprotein] + a 1,2-diacyl-sn-glycero-3-phospho-(1'-sn-glycerol) = an S-1,2-diacyl-sn-glyceryl-L-cysteinyl-[prolipoprotein] + sn-glycerol 1-phosphate + H(+)</text>
        <dbReference type="Rhea" id="RHEA:56712"/>
        <dbReference type="Rhea" id="RHEA-COMP:14679"/>
        <dbReference type="Rhea" id="RHEA-COMP:14680"/>
        <dbReference type="ChEBI" id="CHEBI:15378"/>
        <dbReference type="ChEBI" id="CHEBI:29950"/>
        <dbReference type="ChEBI" id="CHEBI:57685"/>
        <dbReference type="ChEBI" id="CHEBI:64716"/>
        <dbReference type="ChEBI" id="CHEBI:140658"/>
        <dbReference type="EC" id="2.5.1.145"/>
    </reaction>
</comment>
<comment type="pathway">
    <text evidence="1">Protein modification; lipoprotein biosynthesis (diacylglyceryl transfer).</text>
</comment>
<comment type="subcellular location">
    <subcellularLocation>
        <location evidence="1">Cell inner membrane</location>
        <topology evidence="1">Multi-pass membrane protein</topology>
    </subcellularLocation>
</comment>
<comment type="similarity">
    <text evidence="1">Belongs to the Lgt family.</text>
</comment>
<proteinExistence type="inferred from homology"/>
<accession>A0K9N3</accession>
<gene>
    <name evidence="1" type="primary">lgt</name>
    <name type="ordered locus">Bcen2424_2460</name>
</gene>
<name>LGT_BURCH</name>